<gene>
    <name evidence="1" type="primary">ligA</name>
    <name type="ordered locus">SNSL254_A2620</name>
</gene>
<protein>
    <recommendedName>
        <fullName evidence="1">DNA ligase</fullName>
        <ecNumber evidence="1">6.5.1.2</ecNumber>
    </recommendedName>
    <alternativeName>
        <fullName evidence="1">Polydeoxyribonucleotide synthase [NAD(+)]</fullName>
    </alternativeName>
</protein>
<name>DNLJ_SALNS</name>
<comment type="function">
    <text evidence="1">DNA ligase that catalyzes the formation of phosphodiester linkages between 5'-phosphoryl and 3'-hydroxyl groups in double-stranded DNA using NAD as a coenzyme and as the energy source for the reaction. It is essential for DNA replication and repair of damaged DNA.</text>
</comment>
<comment type="catalytic activity">
    <reaction evidence="1">
        <text>NAD(+) + (deoxyribonucleotide)n-3'-hydroxyl + 5'-phospho-(deoxyribonucleotide)m = (deoxyribonucleotide)n+m + AMP + beta-nicotinamide D-nucleotide.</text>
        <dbReference type="EC" id="6.5.1.2"/>
    </reaction>
</comment>
<comment type="cofactor">
    <cofactor evidence="1">
        <name>Mg(2+)</name>
        <dbReference type="ChEBI" id="CHEBI:18420"/>
    </cofactor>
    <cofactor evidence="1">
        <name>Mn(2+)</name>
        <dbReference type="ChEBI" id="CHEBI:29035"/>
    </cofactor>
</comment>
<comment type="similarity">
    <text evidence="1">Belongs to the NAD-dependent DNA ligase family. LigA subfamily.</text>
</comment>
<organism>
    <name type="scientific">Salmonella newport (strain SL254)</name>
    <dbReference type="NCBI Taxonomy" id="423368"/>
    <lineage>
        <taxon>Bacteria</taxon>
        <taxon>Pseudomonadati</taxon>
        <taxon>Pseudomonadota</taxon>
        <taxon>Gammaproteobacteria</taxon>
        <taxon>Enterobacterales</taxon>
        <taxon>Enterobacteriaceae</taxon>
        <taxon>Salmonella</taxon>
    </lineage>
</organism>
<evidence type="ECO:0000255" key="1">
    <source>
        <dbReference type="HAMAP-Rule" id="MF_01588"/>
    </source>
</evidence>
<sequence length="671" mass="73453">MEPIEQQLTELRTTLRHHEYLYHVMDAPEIPDAEYDRLMRELRELEAQRPDLITPDSPTQRVGAAPLTAFNQIRHEVPMLSLDNVFDEESFLAFNKRVQDRLKSTENVIWCCELKLDGLAVSILYENGVLVSAATRGDGTTGEDITSNVRTIRAIPLKLHGDNIPARLEVRGEVFLPQAGFEKINEDARRTGGKVFANPRNAAAGSLRQLDPRITAKRPLTFFCYGVGILEGGELPDTHLGRLLQFKAWGLPVSDRVTLCDSPQAVLDFYRNVEKDRPTLGFDIDGVVIKVNSLALQEQLGFVARAPRWAVAFKFPAQEQMTFVRDVEFQVGRTGAITPVARLEPVQVAGVLVSNATLHNADEIERLGLRIGDKVVIRRAGDVIPQVVNVVLSERPEETRPIVFPTHCPVCGSDVERVEGEAVTRCTGGLICGAQRKESLKHFVSRRAMDVDGMGDKIIDQLVEREYVHTPADLFRLTAGKLTGLDRMGPKSAQNVVNALEKAKATTFARFLYALGIREVGEATAAGLAAYFGTLEALQAATIDELQKVPDVGIVVATHVFNFFAEESNRDVIGQLLAEGVHWPAPVVINVQEIDSPFAGKTVVLTGSLSQMSRDDAKARLVALGAKVAGSVSKKTDLVIAGEAAGSKLAKAQELGINVIDEAEMIRLLGA</sequence>
<proteinExistence type="inferred from homology"/>
<dbReference type="EC" id="6.5.1.2" evidence="1"/>
<dbReference type="EMBL" id="CP001113">
    <property type="protein sequence ID" value="ACF63778.1"/>
    <property type="molecule type" value="Genomic_DNA"/>
</dbReference>
<dbReference type="RefSeq" id="WP_000433279.1">
    <property type="nucleotide sequence ID" value="NZ_CCMR01000001.1"/>
</dbReference>
<dbReference type="SMR" id="B4SZU5"/>
<dbReference type="KEGG" id="see:SNSL254_A2620"/>
<dbReference type="HOGENOM" id="CLU_007764_2_1_6"/>
<dbReference type="Proteomes" id="UP000008824">
    <property type="component" value="Chromosome"/>
</dbReference>
<dbReference type="GO" id="GO:0005829">
    <property type="term" value="C:cytosol"/>
    <property type="evidence" value="ECO:0007669"/>
    <property type="project" value="TreeGrafter"/>
</dbReference>
<dbReference type="GO" id="GO:0003677">
    <property type="term" value="F:DNA binding"/>
    <property type="evidence" value="ECO:0007669"/>
    <property type="project" value="InterPro"/>
</dbReference>
<dbReference type="GO" id="GO:0003911">
    <property type="term" value="F:DNA ligase (NAD+) activity"/>
    <property type="evidence" value="ECO:0007669"/>
    <property type="project" value="UniProtKB-UniRule"/>
</dbReference>
<dbReference type="GO" id="GO:0046872">
    <property type="term" value="F:metal ion binding"/>
    <property type="evidence" value="ECO:0007669"/>
    <property type="project" value="UniProtKB-KW"/>
</dbReference>
<dbReference type="GO" id="GO:0006281">
    <property type="term" value="P:DNA repair"/>
    <property type="evidence" value="ECO:0007669"/>
    <property type="project" value="UniProtKB-KW"/>
</dbReference>
<dbReference type="GO" id="GO:0006260">
    <property type="term" value="P:DNA replication"/>
    <property type="evidence" value="ECO:0007669"/>
    <property type="project" value="UniProtKB-KW"/>
</dbReference>
<dbReference type="CDD" id="cd17748">
    <property type="entry name" value="BRCT_DNA_ligase_like"/>
    <property type="match status" value="1"/>
</dbReference>
<dbReference type="CDD" id="cd00114">
    <property type="entry name" value="LIGANc"/>
    <property type="match status" value="1"/>
</dbReference>
<dbReference type="FunFam" id="1.10.150.20:FF:000006">
    <property type="entry name" value="DNA ligase"/>
    <property type="match status" value="1"/>
</dbReference>
<dbReference type="FunFam" id="1.10.150.20:FF:000007">
    <property type="entry name" value="DNA ligase"/>
    <property type="match status" value="1"/>
</dbReference>
<dbReference type="FunFam" id="1.10.287.610:FF:000002">
    <property type="entry name" value="DNA ligase"/>
    <property type="match status" value="1"/>
</dbReference>
<dbReference type="FunFam" id="2.40.50.140:FF:000012">
    <property type="entry name" value="DNA ligase"/>
    <property type="match status" value="1"/>
</dbReference>
<dbReference type="FunFam" id="3.30.470.30:FF:000001">
    <property type="entry name" value="DNA ligase"/>
    <property type="match status" value="1"/>
</dbReference>
<dbReference type="FunFam" id="3.40.50.10190:FF:000004">
    <property type="entry name" value="DNA ligase"/>
    <property type="match status" value="1"/>
</dbReference>
<dbReference type="FunFam" id="6.20.10.30:FF:000001">
    <property type="entry name" value="DNA ligase"/>
    <property type="match status" value="1"/>
</dbReference>
<dbReference type="Gene3D" id="6.20.10.30">
    <property type="match status" value="1"/>
</dbReference>
<dbReference type="Gene3D" id="1.10.150.20">
    <property type="entry name" value="5' to 3' exonuclease, C-terminal subdomain"/>
    <property type="match status" value="2"/>
</dbReference>
<dbReference type="Gene3D" id="3.40.50.10190">
    <property type="entry name" value="BRCT domain"/>
    <property type="match status" value="1"/>
</dbReference>
<dbReference type="Gene3D" id="3.30.470.30">
    <property type="entry name" value="DNA ligase/mRNA capping enzyme"/>
    <property type="match status" value="1"/>
</dbReference>
<dbReference type="Gene3D" id="1.10.287.610">
    <property type="entry name" value="Helix hairpin bin"/>
    <property type="match status" value="1"/>
</dbReference>
<dbReference type="Gene3D" id="2.40.50.140">
    <property type="entry name" value="Nucleic acid-binding proteins"/>
    <property type="match status" value="1"/>
</dbReference>
<dbReference type="HAMAP" id="MF_01588">
    <property type="entry name" value="DNA_ligase_A"/>
    <property type="match status" value="1"/>
</dbReference>
<dbReference type="InterPro" id="IPR001357">
    <property type="entry name" value="BRCT_dom"/>
</dbReference>
<dbReference type="InterPro" id="IPR036420">
    <property type="entry name" value="BRCT_dom_sf"/>
</dbReference>
<dbReference type="InterPro" id="IPR041663">
    <property type="entry name" value="DisA/LigA_HHH"/>
</dbReference>
<dbReference type="InterPro" id="IPR001679">
    <property type="entry name" value="DNA_ligase"/>
</dbReference>
<dbReference type="InterPro" id="IPR018239">
    <property type="entry name" value="DNA_ligase_AS"/>
</dbReference>
<dbReference type="InterPro" id="IPR033136">
    <property type="entry name" value="DNA_ligase_CS"/>
</dbReference>
<dbReference type="InterPro" id="IPR013839">
    <property type="entry name" value="DNAligase_adenylation"/>
</dbReference>
<dbReference type="InterPro" id="IPR013840">
    <property type="entry name" value="DNAligase_N"/>
</dbReference>
<dbReference type="InterPro" id="IPR003583">
    <property type="entry name" value="Hlx-hairpin-Hlx_DNA-bd_motif"/>
</dbReference>
<dbReference type="InterPro" id="IPR012340">
    <property type="entry name" value="NA-bd_OB-fold"/>
</dbReference>
<dbReference type="InterPro" id="IPR004150">
    <property type="entry name" value="NAD_DNA_ligase_OB"/>
</dbReference>
<dbReference type="InterPro" id="IPR010994">
    <property type="entry name" value="RuvA_2-like"/>
</dbReference>
<dbReference type="InterPro" id="IPR004149">
    <property type="entry name" value="Znf_DNAligase_C4"/>
</dbReference>
<dbReference type="NCBIfam" id="TIGR00575">
    <property type="entry name" value="dnlj"/>
    <property type="match status" value="1"/>
</dbReference>
<dbReference type="NCBIfam" id="NF005932">
    <property type="entry name" value="PRK07956.1"/>
    <property type="match status" value="1"/>
</dbReference>
<dbReference type="PANTHER" id="PTHR23389">
    <property type="entry name" value="CHROMOSOME TRANSMISSION FIDELITY FACTOR 18"/>
    <property type="match status" value="1"/>
</dbReference>
<dbReference type="PANTHER" id="PTHR23389:SF9">
    <property type="entry name" value="DNA LIGASE"/>
    <property type="match status" value="1"/>
</dbReference>
<dbReference type="Pfam" id="PF00533">
    <property type="entry name" value="BRCT"/>
    <property type="match status" value="1"/>
</dbReference>
<dbReference type="Pfam" id="PF01653">
    <property type="entry name" value="DNA_ligase_aden"/>
    <property type="match status" value="1"/>
</dbReference>
<dbReference type="Pfam" id="PF03120">
    <property type="entry name" value="DNA_ligase_OB"/>
    <property type="match status" value="1"/>
</dbReference>
<dbReference type="Pfam" id="PF03119">
    <property type="entry name" value="DNA_ligase_ZBD"/>
    <property type="match status" value="1"/>
</dbReference>
<dbReference type="Pfam" id="PF12826">
    <property type="entry name" value="HHH_2"/>
    <property type="match status" value="1"/>
</dbReference>
<dbReference type="Pfam" id="PF14520">
    <property type="entry name" value="HHH_5"/>
    <property type="match status" value="1"/>
</dbReference>
<dbReference type="Pfam" id="PF22745">
    <property type="entry name" value="Nlig-Ia"/>
    <property type="match status" value="1"/>
</dbReference>
<dbReference type="PIRSF" id="PIRSF001604">
    <property type="entry name" value="LigA"/>
    <property type="match status" value="1"/>
</dbReference>
<dbReference type="SMART" id="SM00292">
    <property type="entry name" value="BRCT"/>
    <property type="match status" value="1"/>
</dbReference>
<dbReference type="SMART" id="SM00278">
    <property type="entry name" value="HhH1"/>
    <property type="match status" value="4"/>
</dbReference>
<dbReference type="SMART" id="SM00532">
    <property type="entry name" value="LIGANc"/>
    <property type="match status" value="1"/>
</dbReference>
<dbReference type="SUPFAM" id="SSF52113">
    <property type="entry name" value="BRCT domain"/>
    <property type="match status" value="1"/>
</dbReference>
<dbReference type="SUPFAM" id="SSF56091">
    <property type="entry name" value="DNA ligase/mRNA capping enzyme, catalytic domain"/>
    <property type="match status" value="1"/>
</dbReference>
<dbReference type="SUPFAM" id="SSF50249">
    <property type="entry name" value="Nucleic acid-binding proteins"/>
    <property type="match status" value="1"/>
</dbReference>
<dbReference type="SUPFAM" id="SSF47781">
    <property type="entry name" value="RuvA domain 2-like"/>
    <property type="match status" value="1"/>
</dbReference>
<dbReference type="PROSITE" id="PS50172">
    <property type="entry name" value="BRCT"/>
    <property type="match status" value="1"/>
</dbReference>
<dbReference type="PROSITE" id="PS01055">
    <property type="entry name" value="DNA_LIGASE_N1"/>
    <property type="match status" value="1"/>
</dbReference>
<dbReference type="PROSITE" id="PS01056">
    <property type="entry name" value="DNA_LIGASE_N2"/>
    <property type="match status" value="1"/>
</dbReference>
<reference key="1">
    <citation type="journal article" date="2011" name="J. Bacteriol.">
        <title>Comparative genomics of 28 Salmonella enterica isolates: evidence for CRISPR-mediated adaptive sublineage evolution.</title>
        <authorList>
            <person name="Fricke W.F."/>
            <person name="Mammel M.K."/>
            <person name="McDermott P.F."/>
            <person name="Tartera C."/>
            <person name="White D.G."/>
            <person name="Leclerc J.E."/>
            <person name="Ravel J."/>
            <person name="Cebula T.A."/>
        </authorList>
    </citation>
    <scope>NUCLEOTIDE SEQUENCE [LARGE SCALE GENOMIC DNA]</scope>
    <source>
        <strain>SL254</strain>
    </source>
</reference>
<keyword id="KW-0227">DNA damage</keyword>
<keyword id="KW-0234">DNA repair</keyword>
<keyword id="KW-0235">DNA replication</keyword>
<keyword id="KW-0436">Ligase</keyword>
<keyword id="KW-0460">Magnesium</keyword>
<keyword id="KW-0464">Manganese</keyword>
<keyword id="KW-0479">Metal-binding</keyword>
<keyword id="KW-0520">NAD</keyword>
<keyword id="KW-0862">Zinc</keyword>
<feature type="chain" id="PRO_0000380465" description="DNA ligase">
    <location>
        <begin position="1"/>
        <end position="671"/>
    </location>
</feature>
<feature type="domain" description="BRCT" evidence="1">
    <location>
        <begin position="593"/>
        <end position="671"/>
    </location>
</feature>
<feature type="active site" description="N6-AMP-lysine intermediate" evidence="1">
    <location>
        <position position="115"/>
    </location>
</feature>
<feature type="binding site" evidence="1">
    <location>
        <begin position="32"/>
        <end position="36"/>
    </location>
    <ligand>
        <name>NAD(+)</name>
        <dbReference type="ChEBI" id="CHEBI:57540"/>
    </ligand>
</feature>
<feature type="binding site" evidence="1">
    <location>
        <begin position="81"/>
        <end position="82"/>
    </location>
    <ligand>
        <name>NAD(+)</name>
        <dbReference type="ChEBI" id="CHEBI:57540"/>
    </ligand>
</feature>
<feature type="binding site" evidence="1">
    <location>
        <position position="113"/>
    </location>
    <ligand>
        <name>NAD(+)</name>
        <dbReference type="ChEBI" id="CHEBI:57540"/>
    </ligand>
</feature>
<feature type="binding site" evidence="1">
    <location>
        <position position="136"/>
    </location>
    <ligand>
        <name>NAD(+)</name>
        <dbReference type="ChEBI" id="CHEBI:57540"/>
    </ligand>
</feature>
<feature type="binding site" evidence="1">
    <location>
        <position position="173"/>
    </location>
    <ligand>
        <name>NAD(+)</name>
        <dbReference type="ChEBI" id="CHEBI:57540"/>
    </ligand>
</feature>
<feature type="binding site" evidence="1">
    <location>
        <position position="290"/>
    </location>
    <ligand>
        <name>NAD(+)</name>
        <dbReference type="ChEBI" id="CHEBI:57540"/>
    </ligand>
</feature>
<feature type="binding site" evidence="1">
    <location>
        <position position="314"/>
    </location>
    <ligand>
        <name>NAD(+)</name>
        <dbReference type="ChEBI" id="CHEBI:57540"/>
    </ligand>
</feature>
<feature type="binding site" evidence="1">
    <location>
        <position position="408"/>
    </location>
    <ligand>
        <name>Zn(2+)</name>
        <dbReference type="ChEBI" id="CHEBI:29105"/>
    </ligand>
</feature>
<feature type="binding site" evidence="1">
    <location>
        <position position="411"/>
    </location>
    <ligand>
        <name>Zn(2+)</name>
        <dbReference type="ChEBI" id="CHEBI:29105"/>
    </ligand>
</feature>
<feature type="binding site" evidence="1">
    <location>
        <position position="426"/>
    </location>
    <ligand>
        <name>Zn(2+)</name>
        <dbReference type="ChEBI" id="CHEBI:29105"/>
    </ligand>
</feature>
<feature type="binding site" evidence="1">
    <location>
        <position position="432"/>
    </location>
    <ligand>
        <name>Zn(2+)</name>
        <dbReference type="ChEBI" id="CHEBI:29105"/>
    </ligand>
</feature>
<accession>B4SZU5</accession>